<comment type="function">
    <text evidence="1">Catalyzes the isomerization of 5-dehydro-4-deoxy-D-glucuronate to 3-deoxy-D-glycero-2,5-hexodiulosonate.</text>
</comment>
<comment type="catalytic activity">
    <reaction evidence="1">
        <text>5-dehydro-4-deoxy-D-glucuronate = 3-deoxy-D-glycero-2,5-hexodiulosonate</text>
        <dbReference type="Rhea" id="RHEA:23896"/>
        <dbReference type="ChEBI" id="CHEBI:17117"/>
        <dbReference type="ChEBI" id="CHEBI:29071"/>
        <dbReference type="EC" id="5.3.1.17"/>
    </reaction>
</comment>
<comment type="cofactor">
    <cofactor evidence="1">
        <name>Zn(2+)</name>
        <dbReference type="ChEBI" id="CHEBI:29105"/>
    </cofactor>
    <text evidence="1">Binds 1 zinc ion per subunit.</text>
</comment>
<comment type="pathway">
    <text evidence="1">Glycan metabolism; pectin degradation; 2-dehydro-3-deoxy-D-gluconate from pectin: step 4/5.</text>
</comment>
<comment type="similarity">
    <text evidence="1">Belongs to the KduI family.</text>
</comment>
<reference key="1">
    <citation type="journal article" date="2011" name="J. Bacteriol.">
        <title>Comparative genomics of 28 Salmonella enterica isolates: evidence for CRISPR-mediated adaptive sublineage evolution.</title>
        <authorList>
            <person name="Fricke W.F."/>
            <person name="Mammel M.K."/>
            <person name="McDermott P.F."/>
            <person name="Tartera C."/>
            <person name="White D.G."/>
            <person name="Leclerc J.E."/>
            <person name="Ravel J."/>
            <person name="Cebula T.A."/>
        </authorList>
    </citation>
    <scope>NUCLEOTIDE SEQUENCE [LARGE SCALE GENOMIC DNA]</scope>
    <source>
        <strain>CVM19633</strain>
    </source>
</reference>
<proteinExistence type="inferred from homology"/>
<protein>
    <recommendedName>
        <fullName evidence="1">4-deoxy-L-threo-5-hexosulose-uronate ketol-isomerase</fullName>
        <ecNumber evidence="1">5.3.1.17</ecNumber>
    </recommendedName>
    <alternativeName>
        <fullName evidence="1">5-keto-4-deoxyuronate isomerase</fullName>
    </alternativeName>
    <alternativeName>
        <fullName evidence="1">DKI isomerase</fullName>
    </alternativeName>
</protein>
<dbReference type="EC" id="5.3.1.17" evidence="1"/>
<dbReference type="EMBL" id="CP001127">
    <property type="protein sequence ID" value="ACF91485.1"/>
    <property type="molecule type" value="Genomic_DNA"/>
</dbReference>
<dbReference type="RefSeq" id="WP_000383274.1">
    <property type="nucleotide sequence ID" value="NC_011094.1"/>
</dbReference>
<dbReference type="SMR" id="B4TUN8"/>
<dbReference type="KEGG" id="sew:SeSA_A3186"/>
<dbReference type="HOGENOM" id="CLU_062609_0_0_6"/>
<dbReference type="UniPathway" id="UPA00545">
    <property type="reaction ID" value="UER00826"/>
</dbReference>
<dbReference type="Proteomes" id="UP000001865">
    <property type="component" value="Chromosome"/>
</dbReference>
<dbReference type="GO" id="GO:0008697">
    <property type="term" value="F:4-deoxy-L-threo-5-hexosulose-uronate ketol-isomerase activity"/>
    <property type="evidence" value="ECO:0007669"/>
    <property type="project" value="UniProtKB-UniRule"/>
</dbReference>
<dbReference type="GO" id="GO:0008270">
    <property type="term" value="F:zinc ion binding"/>
    <property type="evidence" value="ECO:0007669"/>
    <property type="project" value="UniProtKB-UniRule"/>
</dbReference>
<dbReference type="GO" id="GO:0019698">
    <property type="term" value="P:D-galacturonate catabolic process"/>
    <property type="evidence" value="ECO:0007669"/>
    <property type="project" value="TreeGrafter"/>
</dbReference>
<dbReference type="GO" id="GO:0042840">
    <property type="term" value="P:D-glucuronate catabolic process"/>
    <property type="evidence" value="ECO:0007669"/>
    <property type="project" value="TreeGrafter"/>
</dbReference>
<dbReference type="GO" id="GO:0045490">
    <property type="term" value="P:pectin catabolic process"/>
    <property type="evidence" value="ECO:0007669"/>
    <property type="project" value="UniProtKB-UniRule"/>
</dbReference>
<dbReference type="CDD" id="cd20491">
    <property type="entry name" value="cupin_KduI_C"/>
    <property type="match status" value="1"/>
</dbReference>
<dbReference type="CDD" id="cd20294">
    <property type="entry name" value="cupin_KduI_N"/>
    <property type="match status" value="1"/>
</dbReference>
<dbReference type="FunFam" id="2.60.120.10:FF:000018">
    <property type="entry name" value="4-deoxy-L-threo-5-hexosulose-uronate ketol-isomerase"/>
    <property type="match status" value="1"/>
</dbReference>
<dbReference type="FunFam" id="2.60.120.520:FF:000001">
    <property type="entry name" value="4-deoxy-L-threo-5-hexosulose-uronate ketol-isomerase"/>
    <property type="match status" value="1"/>
</dbReference>
<dbReference type="Gene3D" id="2.60.120.10">
    <property type="entry name" value="Jelly Rolls"/>
    <property type="match status" value="1"/>
</dbReference>
<dbReference type="Gene3D" id="2.60.120.520">
    <property type="entry name" value="pectin degrading enzyme 5-keto 4- deoxyuronate isomerase, domain 1"/>
    <property type="match status" value="1"/>
</dbReference>
<dbReference type="HAMAP" id="MF_00687">
    <property type="entry name" value="KduI"/>
    <property type="match status" value="1"/>
</dbReference>
<dbReference type="InterPro" id="IPR007045">
    <property type="entry name" value="KduI"/>
</dbReference>
<dbReference type="InterPro" id="IPR021120">
    <property type="entry name" value="KduI/IolB_isomerase"/>
</dbReference>
<dbReference type="InterPro" id="IPR027449">
    <property type="entry name" value="KduI_N"/>
</dbReference>
<dbReference type="InterPro" id="IPR014710">
    <property type="entry name" value="RmlC-like_jellyroll"/>
</dbReference>
<dbReference type="InterPro" id="IPR011051">
    <property type="entry name" value="RmlC_Cupin_sf"/>
</dbReference>
<dbReference type="NCBIfam" id="NF002091">
    <property type="entry name" value="PRK00924.1"/>
    <property type="match status" value="1"/>
</dbReference>
<dbReference type="PANTHER" id="PTHR38461">
    <property type="entry name" value="4-DEOXY-L-THREO-5-HEXOSULOSE-URONATE KETOL-ISOMERASE"/>
    <property type="match status" value="1"/>
</dbReference>
<dbReference type="PANTHER" id="PTHR38461:SF1">
    <property type="entry name" value="4-DEOXY-L-THREO-5-HEXOSULOSE-URONATE KETOL-ISOMERASE"/>
    <property type="match status" value="1"/>
</dbReference>
<dbReference type="Pfam" id="PF04962">
    <property type="entry name" value="KduI"/>
    <property type="match status" value="1"/>
</dbReference>
<dbReference type="PIRSF" id="PIRSF006625">
    <property type="entry name" value="KduI"/>
    <property type="match status" value="1"/>
</dbReference>
<dbReference type="SUPFAM" id="SSF51182">
    <property type="entry name" value="RmlC-like cupins"/>
    <property type="match status" value="1"/>
</dbReference>
<sequence length="278" mass="31205">MDVRQSIHSEHAKTLDTQALRREFLIENIFVADEYTMVYSHIDRIIVGGIMPVSHSVEIGGEVGKQLGVSRLLDRRELGVINIGGAGAIIVDGQRHDIGHRDALYIGKGAKELVFVSNEASRPAKFYYNCAPAHTAYPTKKVSPADVAPVTLGDNLTSNRRTINKYFVPDVLETCQLSMGLTELAPGNLWNTMPCHTHERRMEVYLYFNMEEDSCVFHMMGQPQETRHIVMRNEQAVISPSWSIHSGVGTKAYTFIWGMVGENQVFDDMDHVAVQDLR</sequence>
<feature type="chain" id="PRO_1000131895" description="4-deoxy-L-threo-5-hexosulose-uronate ketol-isomerase">
    <location>
        <begin position="1"/>
        <end position="278"/>
    </location>
</feature>
<feature type="binding site" evidence="1">
    <location>
        <position position="196"/>
    </location>
    <ligand>
        <name>Zn(2+)</name>
        <dbReference type="ChEBI" id="CHEBI:29105"/>
    </ligand>
</feature>
<feature type="binding site" evidence="1">
    <location>
        <position position="198"/>
    </location>
    <ligand>
        <name>Zn(2+)</name>
        <dbReference type="ChEBI" id="CHEBI:29105"/>
    </ligand>
</feature>
<feature type="binding site" evidence="1">
    <location>
        <position position="203"/>
    </location>
    <ligand>
        <name>Zn(2+)</name>
        <dbReference type="ChEBI" id="CHEBI:29105"/>
    </ligand>
</feature>
<feature type="binding site" evidence="1">
    <location>
        <position position="245"/>
    </location>
    <ligand>
        <name>Zn(2+)</name>
        <dbReference type="ChEBI" id="CHEBI:29105"/>
    </ligand>
</feature>
<evidence type="ECO:0000255" key="1">
    <source>
        <dbReference type="HAMAP-Rule" id="MF_00687"/>
    </source>
</evidence>
<gene>
    <name evidence="1" type="primary">kduI</name>
    <name type="ordered locus">SeSA_A3186</name>
</gene>
<keyword id="KW-0413">Isomerase</keyword>
<keyword id="KW-0479">Metal-binding</keyword>
<keyword id="KW-0862">Zinc</keyword>
<organism>
    <name type="scientific">Salmonella schwarzengrund (strain CVM19633)</name>
    <dbReference type="NCBI Taxonomy" id="439843"/>
    <lineage>
        <taxon>Bacteria</taxon>
        <taxon>Pseudomonadati</taxon>
        <taxon>Pseudomonadota</taxon>
        <taxon>Gammaproteobacteria</taxon>
        <taxon>Enterobacterales</taxon>
        <taxon>Enterobacteriaceae</taxon>
        <taxon>Salmonella</taxon>
    </lineage>
</organism>
<accession>B4TUN8</accession>
<name>KDUI_SALSV</name>